<reference key="1">
    <citation type="journal article" date="2008" name="PLoS Genet.">
        <title>Genomic islands in the pathogenic filamentous fungus Aspergillus fumigatus.</title>
        <authorList>
            <person name="Fedorova N.D."/>
            <person name="Khaldi N."/>
            <person name="Joardar V.S."/>
            <person name="Maiti R."/>
            <person name="Amedeo P."/>
            <person name="Anderson M.J."/>
            <person name="Crabtree J."/>
            <person name="Silva J.C."/>
            <person name="Badger J.H."/>
            <person name="Albarraq A."/>
            <person name="Angiuoli S."/>
            <person name="Bussey H."/>
            <person name="Bowyer P."/>
            <person name="Cotty P.J."/>
            <person name="Dyer P.S."/>
            <person name="Egan A."/>
            <person name="Galens K."/>
            <person name="Fraser-Liggett C.M."/>
            <person name="Haas B.J."/>
            <person name="Inman J.M."/>
            <person name="Kent R."/>
            <person name="Lemieux S."/>
            <person name="Malavazi I."/>
            <person name="Orvis J."/>
            <person name="Roemer T."/>
            <person name="Ronning C.M."/>
            <person name="Sundaram J.P."/>
            <person name="Sutton G."/>
            <person name="Turner G."/>
            <person name="Venter J.C."/>
            <person name="White O.R."/>
            <person name="Whitty B.R."/>
            <person name="Youngman P."/>
            <person name="Wolfe K.H."/>
            <person name="Goldman G.H."/>
            <person name="Wortman J.R."/>
            <person name="Jiang B."/>
            <person name="Denning D.W."/>
            <person name="Nierman W.C."/>
        </authorList>
    </citation>
    <scope>NUCLEOTIDE SEQUENCE [LARGE SCALE GENOMIC DNA]</scope>
    <source>
        <strain>CBS 144.89 / FGSC A1163 / CEA10</strain>
    </source>
</reference>
<reference key="2">
    <citation type="journal article" date="2019" name="MBio">
        <title>Mitogen-activated protein kinase cross-talk interaction modulates the production of melanins in Aspergillus fumigatus.</title>
        <authorList>
            <person name="Manfiolli A.O."/>
            <person name="Siqueira F.S."/>
            <person name="Dos Reis T.F."/>
            <person name="Van Dijck P."/>
            <person name="Schrevens S."/>
            <person name="Hoefgen S."/>
            <person name="Foege M."/>
            <person name="Strassburger M."/>
            <person name="de Assis L.J."/>
            <person name="Heinekamp T."/>
            <person name="Rocha M.C."/>
            <person name="Janevska S."/>
            <person name="Brakhage A.A."/>
            <person name="Malavazi I."/>
            <person name="Goldman G.H."/>
            <person name="Valiante V."/>
        </authorList>
    </citation>
    <scope>FUNCTION</scope>
    <scope>DISRUPTION PHENOTYPE</scope>
    <scope>SUBCELLULAR LOCATION</scope>
</reference>
<feature type="chain" id="PRO_0000454882" description="Mitogen-activated protein kinase mpkB">
    <location>
        <begin position="1"/>
        <end position="353"/>
    </location>
</feature>
<feature type="domain" description="Protein kinase" evidence="1">
    <location>
        <begin position="21"/>
        <end position="309"/>
    </location>
</feature>
<feature type="active site" description="Proton acceptor" evidence="2">
    <location>
        <position position="145"/>
    </location>
</feature>
<feature type="binding site" evidence="1">
    <location>
        <begin position="27"/>
        <end position="35"/>
    </location>
    <ligand>
        <name>ATP</name>
        <dbReference type="ChEBI" id="CHEBI:30616"/>
    </ligand>
</feature>
<feature type="binding site" evidence="1">
    <location>
        <position position="50"/>
    </location>
    <ligand>
        <name>ATP</name>
        <dbReference type="ChEBI" id="CHEBI:30616"/>
    </ligand>
</feature>
<evidence type="ECO:0000255" key="1">
    <source>
        <dbReference type="PROSITE-ProRule" id="PRU00159"/>
    </source>
</evidence>
<evidence type="ECO:0000255" key="2">
    <source>
        <dbReference type="PROSITE-ProRule" id="PRU10027"/>
    </source>
</evidence>
<evidence type="ECO:0000255" key="3">
    <source>
        <dbReference type="RuleBase" id="RU361165"/>
    </source>
</evidence>
<evidence type="ECO:0000269" key="4">
    <source>
    </source>
</evidence>
<evidence type="ECO:0000303" key="5">
    <source>
    </source>
</evidence>
<evidence type="ECO:0000305" key="6"/>
<evidence type="ECO:0000305" key="7">
    <source>
    </source>
</evidence>
<sequence>MVQQPPQGGSRKISFNVSEQYEIQDVIGEGAYGVVCSAIHKPSGQKVAIKKITPFDHSMFCLRTLREMKLLRYFNHENIISILDIQRPRNYESFNEVYLIQELMETDMHRVIRTQDLSDDHCQYFIYQTLRALKAMHSANVLHRDLKPSNLLLNANCDLKVCDFGLARSAASTDDNSGFMTEYVATRWYRAPEIMLTFKEYTKAIDVWSVGCILAEMLSGKPLFPGKDYHHQLTLILDVLGTPTMEDYYGIKSRRAREYIRSLPFKKKIPFKALFPKSNELALDLLEKLLAFNPAKRITVEEALRHPYLEPYHDPDDEPTAPPIPEGFFDFDKNKDALSKEQLKTLIYEEIMR</sequence>
<organism>
    <name type="scientific">Aspergillus fumigatus (strain CBS 144.89 / FGSC A1163 / CEA10)</name>
    <name type="common">Neosartorya fumigata</name>
    <dbReference type="NCBI Taxonomy" id="451804"/>
    <lineage>
        <taxon>Eukaryota</taxon>
        <taxon>Fungi</taxon>
        <taxon>Dikarya</taxon>
        <taxon>Ascomycota</taxon>
        <taxon>Pezizomycotina</taxon>
        <taxon>Eurotiomycetes</taxon>
        <taxon>Eurotiomycetidae</taxon>
        <taxon>Eurotiales</taxon>
        <taxon>Aspergillaceae</taxon>
        <taxon>Aspergillus</taxon>
        <taxon>Aspergillus subgen. Fumigati</taxon>
    </lineage>
</organism>
<name>MPKB_ASPFC</name>
<dbReference type="EC" id="2.7.11.24" evidence="7"/>
<dbReference type="EMBL" id="DS499599">
    <property type="protein sequence ID" value="EDP49848.1"/>
    <property type="molecule type" value="Genomic_DNA"/>
</dbReference>
<dbReference type="SMR" id="B0Y8W7"/>
<dbReference type="EnsemblFungi" id="EDP49848">
    <property type="protein sequence ID" value="EDP49848"/>
    <property type="gene ID" value="AFUB_078810"/>
</dbReference>
<dbReference type="VEuPathDB" id="FungiDB:AFUB_078810"/>
<dbReference type="HOGENOM" id="CLU_000288_181_1_1"/>
<dbReference type="OrthoDB" id="16534at5052"/>
<dbReference type="PhylomeDB" id="B0Y8W7"/>
<dbReference type="Proteomes" id="UP000001699">
    <property type="component" value="Unassembled WGS sequence"/>
</dbReference>
<dbReference type="GO" id="GO:0005634">
    <property type="term" value="C:nucleus"/>
    <property type="evidence" value="ECO:0007669"/>
    <property type="project" value="UniProtKB-SubCell"/>
</dbReference>
<dbReference type="GO" id="GO:0005524">
    <property type="term" value="F:ATP binding"/>
    <property type="evidence" value="ECO:0007669"/>
    <property type="project" value="UniProtKB-KW"/>
</dbReference>
<dbReference type="GO" id="GO:0004707">
    <property type="term" value="F:MAP kinase activity"/>
    <property type="evidence" value="ECO:0007669"/>
    <property type="project" value="UniProtKB-EC"/>
</dbReference>
<dbReference type="GO" id="GO:0106310">
    <property type="term" value="F:protein serine kinase activity"/>
    <property type="evidence" value="ECO:0007669"/>
    <property type="project" value="RHEA"/>
</dbReference>
<dbReference type="CDD" id="cd07849">
    <property type="entry name" value="STKc_ERK1_2_like"/>
    <property type="match status" value="1"/>
</dbReference>
<dbReference type="FunFam" id="1.10.510.10:FF:000040">
    <property type="entry name" value="Mitogen-activated protein kinase"/>
    <property type="match status" value="1"/>
</dbReference>
<dbReference type="FunFam" id="3.30.200.20:FF:000073">
    <property type="entry name" value="Mitogen-activated protein kinase"/>
    <property type="match status" value="1"/>
</dbReference>
<dbReference type="Gene3D" id="3.30.200.20">
    <property type="entry name" value="Phosphorylase Kinase, domain 1"/>
    <property type="match status" value="1"/>
</dbReference>
<dbReference type="Gene3D" id="1.10.510.10">
    <property type="entry name" value="Transferase(Phosphotransferase) domain 1"/>
    <property type="match status" value="1"/>
</dbReference>
<dbReference type="InterPro" id="IPR011009">
    <property type="entry name" value="Kinase-like_dom_sf"/>
</dbReference>
<dbReference type="InterPro" id="IPR050117">
    <property type="entry name" value="MAP_kinase"/>
</dbReference>
<dbReference type="InterPro" id="IPR003527">
    <property type="entry name" value="MAP_kinase_CS"/>
</dbReference>
<dbReference type="InterPro" id="IPR000719">
    <property type="entry name" value="Prot_kinase_dom"/>
</dbReference>
<dbReference type="InterPro" id="IPR017441">
    <property type="entry name" value="Protein_kinase_ATP_BS"/>
</dbReference>
<dbReference type="InterPro" id="IPR008271">
    <property type="entry name" value="Ser/Thr_kinase_AS"/>
</dbReference>
<dbReference type="PANTHER" id="PTHR24055">
    <property type="entry name" value="MITOGEN-ACTIVATED PROTEIN KINASE"/>
    <property type="match status" value="1"/>
</dbReference>
<dbReference type="Pfam" id="PF00069">
    <property type="entry name" value="Pkinase"/>
    <property type="match status" value="1"/>
</dbReference>
<dbReference type="SMART" id="SM00220">
    <property type="entry name" value="S_TKc"/>
    <property type="match status" value="1"/>
</dbReference>
<dbReference type="SUPFAM" id="SSF56112">
    <property type="entry name" value="Protein kinase-like (PK-like)"/>
    <property type="match status" value="1"/>
</dbReference>
<dbReference type="PROSITE" id="PS01351">
    <property type="entry name" value="MAPK"/>
    <property type="match status" value="1"/>
</dbReference>
<dbReference type="PROSITE" id="PS00107">
    <property type="entry name" value="PROTEIN_KINASE_ATP"/>
    <property type="match status" value="1"/>
</dbReference>
<dbReference type="PROSITE" id="PS50011">
    <property type="entry name" value="PROTEIN_KINASE_DOM"/>
    <property type="match status" value="1"/>
</dbReference>
<dbReference type="PROSITE" id="PS00108">
    <property type="entry name" value="PROTEIN_KINASE_ST"/>
    <property type="match status" value="1"/>
</dbReference>
<gene>
    <name evidence="5" type="primary">mpkB</name>
    <name type="ORF">AFUB_078810</name>
</gene>
<accession>B0Y8W7</accession>
<keyword id="KW-0067">ATP-binding</keyword>
<keyword id="KW-0418">Kinase</keyword>
<keyword id="KW-0460">Magnesium</keyword>
<keyword id="KW-0547">Nucleotide-binding</keyword>
<keyword id="KW-0539">Nucleus</keyword>
<keyword id="KW-0723">Serine/threonine-protein kinase</keyword>
<keyword id="KW-0808">Transferase</keyword>
<protein>
    <recommendedName>
        <fullName evidence="5">Mitogen-activated protein kinase mpkB</fullName>
        <shortName evidence="5">MAPK mpkB</shortName>
        <ecNumber evidence="7">2.7.11.24</ecNumber>
    </recommendedName>
</protein>
<comment type="function">
    <text evidence="4">Mitogen-activated protein kinase (MAPK) that plays a role in conidiation and regulation of secondary metabolite biosynthesis (PubMed:30914505). Acts as a repressor of dihydroxynaphthalene (DHN)-melanin production (PubMed:30914505).</text>
</comment>
<comment type="catalytic activity">
    <reaction evidence="7">
        <text>L-seryl-[protein] + ATP = O-phospho-L-seryl-[protein] + ADP + H(+)</text>
        <dbReference type="Rhea" id="RHEA:17989"/>
        <dbReference type="Rhea" id="RHEA-COMP:9863"/>
        <dbReference type="Rhea" id="RHEA-COMP:11604"/>
        <dbReference type="ChEBI" id="CHEBI:15378"/>
        <dbReference type="ChEBI" id="CHEBI:29999"/>
        <dbReference type="ChEBI" id="CHEBI:30616"/>
        <dbReference type="ChEBI" id="CHEBI:83421"/>
        <dbReference type="ChEBI" id="CHEBI:456216"/>
        <dbReference type="EC" id="2.7.11.24"/>
    </reaction>
    <physiologicalReaction direction="left-to-right" evidence="7">
        <dbReference type="Rhea" id="RHEA:17990"/>
    </physiologicalReaction>
</comment>
<comment type="catalytic activity">
    <reaction evidence="7">
        <text>L-threonyl-[protein] + ATP = O-phospho-L-threonyl-[protein] + ADP + H(+)</text>
        <dbReference type="Rhea" id="RHEA:46608"/>
        <dbReference type="Rhea" id="RHEA-COMP:11060"/>
        <dbReference type="Rhea" id="RHEA-COMP:11605"/>
        <dbReference type="ChEBI" id="CHEBI:15378"/>
        <dbReference type="ChEBI" id="CHEBI:30013"/>
        <dbReference type="ChEBI" id="CHEBI:30616"/>
        <dbReference type="ChEBI" id="CHEBI:61977"/>
        <dbReference type="ChEBI" id="CHEBI:456216"/>
        <dbReference type="EC" id="2.7.11.24"/>
    </reaction>
    <physiologicalReaction direction="left-to-right" evidence="7">
        <dbReference type="Rhea" id="RHEA:46609"/>
    </physiologicalReaction>
</comment>
<comment type="cofactor">
    <cofactor evidence="3">
        <name>Mg(2+)</name>
        <dbReference type="ChEBI" id="CHEBI:18420"/>
    </cofactor>
</comment>
<comment type="activity regulation">
    <text evidence="3">Activated by threonine and tyrosine phosphorylation.</text>
</comment>
<comment type="subcellular location">
    <subcellularLocation>
        <location evidence="4">Nucleus</location>
    </subcellularLocation>
    <text evidence="4">Translocates into the nucleus upon exposure to caspofungin stress, and this is dependent on the cross-talk interaction with mpkA.</text>
</comment>
<comment type="disruption phenotype">
    <text evidence="4">Leads to a strong increase of dihydroxynaphthalene (DHN)-melanin production (PubMed:30914505). Results in about 3-fold less glucosamine and a lower level of alpha-linked mannose within the cell wall (PubMed:30914505). Does not affect virulence (PubMed:30914505).</text>
</comment>
<comment type="similarity">
    <text evidence="6">Belongs to the protein kinase superfamily. Ser/Thr protein kinase family. MAP kinase subfamily.</text>
</comment>
<proteinExistence type="inferred from homology"/>